<accession>P48307</accession>
<accession>Q66ME8</accession>
<accession>Q8NAK6</accession>
<accession>Q9UC86</accession>
<reference key="1">
    <citation type="journal article" date="1994" name="J. Biochem.">
        <title>cDNA cloning and mRNA expression of a serine proteinase inhibitor secreted by cancer cells: identification as placental protein 5 and tissue factor pathway inhibitor-2.</title>
        <authorList>
            <person name="Miyagi Y."/>
            <person name="Koshikawa N."/>
            <person name="Yasumitsu H."/>
            <person name="Miyagi E."/>
            <person name="Hirahara F."/>
            <person name="Aoki I."/>
            <person name="Misugi K."/>
            <person name="Umeda M."/>
            <person name="Miyazaki K."/>
        </authorList>
    </citation>
    <scope>NUCLEOTIDE SEQUENCE [MRNA] (ISOFORM 1)</scope>
    <scope>PARTIAL PROTEIN SEQUENCE</scope>
    <source>
        <tissue>Placenta</tissue>
    </source>
</reference>
<reference key="2">
    <citation type="journal article" date="1994" name="Proc. Natl. Acad. Sci. U.S.A.">
        <title>Molecular cloning, expression, and partial characterization of a second human tissue-factor-pathway inhibitor.</title>
        <authorList>
            <person name="Sprecher C.A."/>
            <person name="Kisiel W."/>
            <person name="Mathewes S."/>
            <person name="Foster D.C."/>
        </authorList>
    </citation>
    <scope>NUCLEOTIDE SEQUENCE [MRNA] (ISOFORM 1)</scope>
    <source>
        <tissue>Placenta</tissue>
    </source>
</reference>
<reference key="3">
    <citation type="journal article" date="2001" name="Biochim. Biophys. Acta">
        <title>Genomic structure and promoter activity of the human tissue factor pathway inhibitor-2 gene.</title>
        <authorList>
            <person name="Kamei S."/>
            <person name="Kazama Y."/>
            <person name="Kuijper J.L."/>
            <person name="Foster D.C."/>
            <person name="Kisiel W."/>
        </authorList>
    </citation>
    <scope>NUCLEOTIDE SEQUENCE [GENOMIC DNA]</scope>
</reference>
<reference key="4">
    <citation type="submission" date="2004-07" db="EMBL/GenBank/DDBJ databases">
        <authorList>
            <person name="Xu Y."/>
            <person name="Li T."/>
            <person name="Du G."/>
        </authorList>
    </citation>
    <scope>NUCLEOTIDE SEQUENCE [MRNA] (ISOFORM 1)</scope>
</reference>
<reference key="5">
    <citation type="journal article" date="2004" name="Nat. Genet.">
        <title>Complete sequencing and characterization of 21,243 full-length human cDNAs.</title>
        <authorList>
            <person name="Ota T."/>
            <person name="Suzuki Y."/>
            <person name="Nishikawa T."/>
            <person name="Otsuki T."/>
            <person name="Sugiyama T."/>
            <person name="Irie R."/>
            <person name="Wakamatsu A."/>
            <person name="Hayashi K."/>
            <person name="Sato H."/>
            <person name="Nagai K."/>
            <person name="Kimura K."/>
            <person name="Makita H."/>
            <person name="Sekine M."/>
            <person name="Obayashi M."/>
            <person name="Nishi T."/>
            <person name="Shibahara T."/>
            <person name="Tanaka T."/>
            <person name="Ishii S."/>
            <person name="Yamamoto J."/>
            <person name="Saito K."/>
            <person name="Kawai Y."/>
            <person name="Isono Y."/>
            <person name="Nakamura Y."/>
            <person name="Nagahari K."/>
            <person name="Murakami K."/>
            <person name="Yasuda T."/>
            <person name="Iwayanagi T."/>
            <person name="Wagatsuma M."/>
            <person name="Shiratori A."/>
            <person name="Sudo H."/>
            <person name="Hosoiri T."/>
            <person name="Kaku Y."/>
            <person name="Kodaira H."/>
            <person name="Kondo H."/>
            <person name="Sugawara M."/>
            <person name="Takahashi M."/>
            <person name="Kanda K."/>
            <person name="Yokoi T."/>
            <person name="Furuya T."/>
            <person name="Kikkawa E."/>
            <person name="Omura Y."/>
            <person name="Abe K."/>
            <person name="Kamihara K."/>
            <person name="Katsuta N."/>
            <person name="Sato K."/>
            <person name="Tanikawa M."/>
            <person name="Yamazaki M."/>
            <person name="Ninomiya K."/>
            <person name="Ishibashi T."/>
            <person name="Yamashita H."/>
            <person name="Murakawa K."/>
            <person name="Fujimori K."/>
            <person name="Tanai H."/>
            <person name="Kimata M."/>
            <person name="Watanabe M."/>
            <person name="Hiraoka S."/>
            <person name="Chiba Y."/>
            <person name="Ishida S."/>
            <person name="Ono Y."/>
            <person name="Takiguchi S."/>
            <person name="Watanabe S."/>
            <person name="Yosida M."/>
            <person name="Hotuta T."/>
            <person name="Kusano J."/>
            <person name="Kanehori K."/>
            <person name="Takahashi-Fujii A."/>
            <person name="Hara H."/>
            <person name="Tanase T.-O."/>
            <person name="Nomura Y."/>
            <person name="Togiya S."/>
            <person name="Komai F."/>
            <person name="Hara R."/>
            <person name="Takeuchi K."/>
            <person name="Arita M."/>
            <person name="Imose N."/>
            <person name="Musashino K."/>
            <person name="Yuuki H."/>
            <person name="Oshima A."/>
            <person name="Sasaki N."/>
            <person name="Aotsuka S."/>
            <person name="Yoshikawa Y."/>
            <person name="Matsunawa H."/>
            <person name="Ichihara T."/>
            <person name="Shiohata N."/>
            <person name="Sano S."/>
            <person name="Moriya S."/>
            <person name="Momiyama H."/>
            <person name="Satoh N."/>
            <person name="Takami S."/>
            <person name="Terashima Y."/>
            <person name="Suzuki O."/>
            <person name="Nakagawa S."/>
            <person name="Senoh A."/>
            <person name="Mizoguchi H."/>
            <person name="Goto Y."/>
            <person name="Shimizu F."/>
            <person name="Wakebe H."/>
            <person name="Hishigaki H."/>
            <person name="Watanabe T."/>
            <person name="Sugiyama A."/>
            <person name="Takemoto M."/>
            <person name="Kawakami B."/>
            <person name="Yamazaki M."/>
            <person name="Watanabe K."/>
            <person name="Kumagai A."/>
            <person name="Itakura S."/>
            <person name="Fukuzumi Y."/>
            <person name="Fujimori Y."/>
            <person name="Komiyama M."/>
            <person name="Tashiro H."/>
            <person name="Tanigami A."/>
            <person name="Fujiwara T."/>
            <person name="Ono T."/>
            <person name="Yamada K."/>
            <person name="Fujii Y."/>
            <person name="Ozaki K."/>
            <person name="Hirao M."/>
            <person name="Ohmori Y."/>
            <person name="Kawabata A."/>
            <person name="Hikiji T."/>
            <person name="Kobatake N."/>
            <person name="Inagaki H."/>
            <person name="Ikema Y."/>
            <person name="Okamoto S."/>
            <person name="Okitani R."/>
            <person name="Kawakami T."/>
            <person name="Noguchi S."/>
            <person name="Itoh T."/>
            <person name="Shigeta K."/>
            <person name="Senba T."/>
            <person name="Matsumura K."/>
            <person name="Nakajima Y."/>
            <person name="Mizuno T."/>
            <person name="Morinaga M."/>
            <person name="Sasaki M."/>
            <person name="Togashi T."/>
            <person name="Oyama M."/>
            <person name="Hata H."/>
            <person name="Watanabe M."/>
            <person name="Komatsu T."/>
            <person name="Mizushima-Sugano J."/>
            <person name="Satoh T."/>
            <person name="Shirai Y."/>
            <person name="Takahashi Y."/>
            <person name="Nakagawa K."/>
            <person name="Okumura K."/>
            <person name="Nagase T."/>
            <person name="Nomura N."/>
            <person name="Kikuchi H."/>
            <person name="Masuho Y."/>
            <person name="Yamashita R."/>
            <person name="Nakai K."/>
            <person name="Yada T."/>
            <person name="Nakamura Y."/>
            <person name="Ohara O."/>
            <person name="Isogai T."/>
            <person name="Sugano S."/>
        </authorList>
    </citation>
    <scope>NUCLEOTIDE SEQUENCE [LARGE SCALE MRNA] (ISOFORMS 1 AND 2)</scope>
    <source>
        <tissue>Placenta</tissue>
    </source>
</reference>
<reference key="6">
    <citation type="journal article" date="2003" name="Nature">
        <title>The DNA sequence of human chromosome 7.</title>
        <authorList>
            <person name="Hillier L.W."/>
            <person name="Fulton R.S."/>
            <person name="Fulton L.A."/>
            <person name="Graves T.A."/>
            <person name="Pepin K.H."/>
            <person name="Wagner-McPherson C."/>
            <person name="Layman D."/>
            <person name="Maas J."/>
            <person name="Jaeger S."/>
            <person name="Walker R."/>
            <person name="Wylie K."/>
            <person name="Sekhon M."/>
            <person name="Becker M.C."/>
            <person name="O'Laughlin M.D."/>
            <person name="Schaller M.E."/>
            <person name="Fewell G.A."/>
            <person name="Delehaunty K.D."/>
            <person name="Miner T.L."/>
            <person name="Nash W.E."/>
            <person name="Cordes M."/>
            <person name="Du H."/>
            <person name="Sun H."/>
            <person name="Edwards J."/>
            <person name="Bradshaw-Cordum H."/>
            <person name="Ali J."/>
            <person name="Andrews S."/>
            <person name="Isak A."/>
            <person name="Vanbrunt A."/>
            <person name="Nguyen C."/>
            <person name="Du F."/>
            <person name="Lamar B."/>
            <person name="Courtney L."/>
            <person name="Kalicki J."/>
            <person name="Ozersky P."/>
            <person name="Bielicki L."/>
            <person name="Scott K."/>
            <person name="Holmes A."/>
            <person name="Harkins R."/>
            <person name="Harris A."/>
            <person name="Strong C.M."/>
            <person name="Hou S."/>
            <person name="Tomlinson C."/>
            <person name="Dauphin-Kohlberg S."/>
            <person name="Kozlowicz-Reilly A."/>
            <person name="Leonard S."/>
            <person name="Rohlfing T."/>
            <person name="Rock S.M."/>
            <person name="Tin-Wollam A.-M."/>
            <person name="Abbott A."/>
            <person name="Minx P."/>
            <person name="Maupin R."/>
            <person name="Strowmatt C."/>
            <person name="Latreille P."/>
            <person name="Miller N."/>
            <person name="Johnson D."/>
            <person name="Murray J."/>
            <person name="Woessner J.P."/>
            <person name="Wendl M.C."/>
            <person name="Yang S.-P."/>
            <person name="Schultz B.R."/>
            <person name="Wallis J.W."/>
            <person name="Spieth J."/>
            <person name="Bieri T.A."/>
            <person name="Nelson J.O."/>
            <person name="Berkowicz N."/>
            <person name="Wohldmann P.E."/>
            <person name="Cook L.L."/>
            <person name="Hickenbotham M.T."/>
            <person name="Eldred J."/>
            <person name="Williams D."/>
            <person name="Bedell J.A."/>
            <person name="Mardis E.R."/>
            <person name="Clifton S.W."/>
            <person name="Chissoe S.L."/>
            <person name="Marra M.A."/>
            <person name="Raymond C."/>
            <person name="Haugen E."/>
            <person name="Gillett W."/>
            <person name="Zhou Y."/>
            <person name="James R."/>
            <person name="Phelps K."/>
            <person name="Iadanoto S."/>
            <person name="Bubb K."/>
            <person name="Simms E."/>
            <person name="Levy R."/>
            <person name="Clendenning J."/>
            <person name="Kaul R."/>
            <person name="Kent W.J."/>
            <person name="Furey T.S."/>
            <person name="Baertsch R.A."/>
            <person name="Brent M.R."/>
            <person name="Keibler E."/>
            <person name="Flicek P."/>
            <person name="Bork P."/>
            <person name="Suyama M."/>
            <person name="Bailey J.A."/>
            <person name="Portnoy M.E."/>
            <person name="Torrents D."/>
            <person name="Chinwalla A.T."/>
            <person name="Gish W.R."/>
            <person name="Eddy S.R."/>
            <person name="McPherson J.D."/>
            <person name="Olson M.V."/>
            <person name="Eichler E.E."/>
            <person name="Green E.D."/>
            <person name="Waterston R.H."/>
            <person name="Wilson R.K."/>
        </authorList>
    </citation>
    <scope>NUCLEOTIDE SEQUENCE [LARGE SCALE GENOMIC DNA]</scope>
</reference>
<reference key="7">
    <citation type="journal article" date="2003" name="Science">
        <title>Human chromosome 7: DNA sequence and biology.</title>
        <authorList>
            <person name="Scherer S.W."/>
            <person name="Cheung J."/>
            <person name="MacDonald J.R."/>
            <person name="Osborne L.R."/>
            <person name="Nakabayashi K."/>
            <person name="Herbrick J.-A."/>
            <person name="Carson A.R."/>
            <person name="Parker-Katiraee L."/>
            <person name="Skaug J."/>
            <person name="Khaja R."/>
            <person name="Zhang J."/>
            <person name="Hudek A.K."/>
            <person name="Li M."/>
            <person name="Haddad M."/>
            <person name="Duggan G.E."/>
            <person name="Fernandez B.A."/>
            <person name="Kanematsu E."/>
            <person name="Gentles S."/>
            <person name="Christopoulos C.C."/>
            <person name="Choufani S."/>
            <person name="Kwasnicka D."/>
            <person name="Zheng X.H."/>
            <person name="Lai Z."/>
            <person name="Nusskern D.R."/>
            <person name="Zhang Q."/>
            <person name="Gu Z."/>
            <person name="Lu F."/>
            <person name="Zeesman S."/>
            <person name="Nowaczyk M.J."/>
            <person name="Teshima I."/>
            <person name="Chitayat D."/>
            <person name="Shuman C."/>
            <person name="Weksberg R."/>
            <person name="Zackai E.H."/>
            <person name="Grebe T.A."/>
            <person name="Cox S.R."/>
            <person name="Kirkpatrick S.J."/>
            <person name="Rahman N."/>
            <person name="Friedman J.M."/>
            <person name="Heng H.H.Q."/>
            <person name="Pelicci P.G."/>
            <person name="Lo-Coco F."/>
            <person name="Belloni E."/>
            <person name="Shaffer L.G."/>
            <person name="Pober B."/>
            <person name="Morton C.C."/>
            <person name="Gusella J.F."/>
            <person name="Bruns G.A.P."/>
            <person name="Korf B.R."/>
            <person name="Quade B.J."/>
            <person name="Ligon A.H."/>
            <person name="Ferguson H."/>
            <person name="Higgins A.W."/>
            <person name="Leach N.T."/>
            <person name="Herrick S.R."/>
            <person name="Lemyre E."/>
            <person name="Farra C.G."/>
            <person name="Kim H.-G."/>
            <person name="Summers A.M."/>
            <person name="Gripp K.W."/>
            <person name="Roberts W."/>
            <person name="Szatmari P."/>
            <person name="Winsor E.J.T."/>
            <person name="Grzeschik K.-H."/>
            <person name="Teebi A."/>
            <person name="Minassian B.A."/>
            <person name="Kere J."/>
            <person name="Armengol L."/>
            <person name="Pujana M.A."/>
            <person name="Estivill X."/>
            <person name="Wilson M.D."/>
            <person name="Koop B.F."/>
            <person name="Tosi S."/>
            <person name="Moore G.E."/>
            <person name="Boright A.P."/>
            <person name="Zlotorynski E."/>
            <person name="Kerem B."/>
            <person name="Kroisel P.M."/>
            <person name="Petek E."/>
            <person name="Oscier D.G."/>
            <person name="Mould S.J."/>
            <person name="Doehner H."/>
            <person name="Doehner K."/>
            <person name="Rommens J.M."/>
            <person name="Vincent J.B."/>
            <person name="Venter J.C."/>
            <person name="Li P.W."/>
            <person name="Mural R.J."/>
            <person name="Adams M.D."/>
            <person name="Tsui L.-C."/>
        </authorList>
    </citation>
    <scope>NUCLEOTIDE SEQUENCE [LARGE SCALE GENOMIC DNA]</scope>
</reference>
<reference key="8">
    <citation type="submission" date="2005-09" db="EMBL/GenBank/DDBJ databases">
        <authorList>
            <person name="Mural R.J."/>
            <person name="Istrail S."/>
            <person name="Sutton G.G."/>
            <person name="Florea L."/>
            <person name="Halpern A.L."/>
            <person name="Mobarry C.M."/>
            <person name="Lippert R."/>
            <person name="Walenz B."/>
            <person name="Shatkay H."/>
            <person name="Dew I."/>
            <person name="Miller J.R."/>
            <person name="Flanigan M.J."/>
            <person name="Edwards N.J."/>
            <person name="Bolanos R."/>
            <person name="Fasulo D."/>
            <person name="Halldorsson B.V."/>
            <person name="Hannenhalli S."/>
            <person name="Turner R."/>
            <person name="Yooseph S."/>
            <person name="Lu F."/>
            <person name="Nusskern D.R."/>
            <person name="Shue B.C."/>
            <person name="Zheng X.H."/>
            <person name="Zhong F."/>
            <person name="Delcher A.L."/>
            <person name="Huson D.H."/>
            <person name="Kravitz S.A."/>
            <person name="Mouchard L."/>
            <person name="Reinert K."/>
            <person name="Remington K.A."/>
            <person name="Clark A.G."/>
            <person name="Waterman M.S."/>
            <person name="Eichler E.E."/>
            <person name="Adams M.D."/>
            <person name="Hunkapiller M.W."/>
            <person name="Myers E.W."/>
            <person name="Venter J.C."/>
        </authorList>
    </citation>
    <scope>NUCLEOTIDE SEQUENCE [LARGE SCALE GENOMIC DNA]</scope>
</reference>
<reference key="9">
    <citation type="journal article" date="2004" name="Genome Res.">
        <title>The status, quality, and expansion of the NIH full-length cDNA project: the Mammalian Gene Collection (MGC).</title>
        <authorList>
            <consortium name="The MGC Project Team"/>
        </authorList>
    </citation>
    <scope>NUCLEOTIDE SEQUENCE [LARGE SCALE MRNA] (ISOFORM 1)</scope>
    <source>
        <tissue>Brain</tissue>
    </source>
</reference>
<reference key="10">
    <citation type="journal article" date="1995" name="Arch. Biochem. Biophys.">
        <title>Novel extracellular matrix-associated serine proteinase inhibitors from human skin fibroblasts.</title>
        <authorList>
            <person name="Rao C.N."/>
            <person name="Liu Y.Y."/>
            <person name="Peavey C.L."/>
            <person name="Woodley D.T."/>
        </authorList>
    </citation>
    <scope>PROTEIN SEQUENCE OF 23-42</scope>
    <scope>FUNCTION</scope>
    <source>
        <tissue>Fibroblast</tissue>
    </source>
</reference>
<reference key="11">
    <citation type="journal article" date="1988" name="Biochem. Biophys. Res. Commun.">
        <title>Purification and characterization of placental protein 5.</title>
        <authorList>
            <person name="Buetzow R."/>
            <person name="Huhtala M.-L."/>
            <person name="Bohn H."/>
            <person name="Virtanen I."/>
            <person name="Seppaelae M."/>
        </authorList>
    </citation>
    <scope>PROTEIN SEQUENCE OF 23-35; 47-53 AND 133-146</scope>
    <source>
        <tissue>Placenta</tissue>
    </source>
</reference>
<reference key="12">
    <citation type="journal article" date="1988" name="Biochem. Biophys. Res. Commun.">
        <authorList>
            <person name="Buetzow R."/>
            <person name="Huhtala M.-L."/>
            <person name="Bohn H."/>
            <person name="Virtanen I."/>
            <person name="Seppaelae M."/>
        </authorList>
    </citation>
    <scope>ERRATUM OF PUBMED:3276312</scope>
</reference>
<reference key="13">
    <citation type="journal article" date="2005" name="J. Biol. Chem.">
        <title>Crystal structure of Kunitz domain 1 (KD1) of tissue factor pathway inhibitor-2 in complex with trypsin. Implications for KD1 specificity of inhibition.</title>
        <authorList>
            <person name="Schmidt A.E."/>
            <person name="Chand H.S."/>
            <person name="Cascio D."/>
            <person name="Kisiel W."/>
            <person name="Bajaj S.P."/>
        </authorList>
    </citation>
    <scope>X-RAY CRYSTALLOGRAPHY (1.8 ANGSTROMS) OF 28-90 IN COMPLEX WITH BOVINE TRYPSIN</scope>
    <scope>DISULFIDE BONDS</scope>
</reference>
<reference key="14">
    <citation type="journal article" date="2014" name="Cancer Lett.">
        <title>Protein phosphatase complex PP5/PPP2R3C dephosphorylates P-glycoprotein/ABCB1 and down-regulates the expression and function.</title>
        <authorList>
            <person name="Katayama K."/>
            <person name="Yamaguchi M."/>
            <person name="Noguchi K."/>
            <person name="Sugimoto Y."/>
        </authorList>
    </citation>
    <scope>INTERACTION WITH PPP2R3C</scope>
</reference>
<proteinExistence type="evidence at protein level"/>
<keyword id="KW-0002">3D-structure</keyword>
<keyword id="KW-0025">Alternative splicing</keyword>
<keyword id="KW-0094">Blood coagulation</keyword>
<keyword id="KW-0903">Direct protein sequencing</keyword>
<keyword id="KW-1015">Disulfide bond</keyword>
<keyword id="KW-0325">Glycoprotein</keyword>
<keyword id="KW-0356">Hemostasis</keyword>
<keyword id="KW-0646">Protease inhibitor</keyword>
<keyword id="KW-1267">Proteomics identification</keyword>
<keyword id="KW-1185">Reference proteome</keyword>
<keyword id="KW-0677">Repeat</keyword>
<keyword id="KW-0964">Secreted</keyword>
<keyword id="KW-0722">Serine protease inhibitor</keyword>
<keyword id="KW-0732">Signal</keyword>
<sequence>MDPARPLGLSILLLFLTEAALGDAAQEPTGNNAEICLLPLDYGPCRALLLRYYYDRYTQSCRQFLYGGCEGNANNFYTWEACDDACWRIEKVPKVCRLQVSVDDQCEGSTEKYFFNLSSMTCEKFFSGGCHRNRIENRFPDEATCMGFCAPKKIPSFCYSPKDEGLCSANVTRYYFNPRYRTCDAFTYTGCGGNDNNFVSREDCKRACAKALKKKKKMPKLRFASRIRKIRKKQF</sequence>
<organism>
    <name type="scientific">Homo sapiens</name>
    <name type="common">Human</name>
    <dbReference type="NCBI Taxonomy" id="9606"/>
    <lineage>
        <taxon>Eukaryota</taxon>
        <taxon>Metazoa</taxon>
        <taxon>Chordata</taxon>
        <taxon>Craniata</taxon>
        <taxon>Vertebrata</taxon>
        <taxon>Euteleostomi</taxon>
        <taxon>Mammalia</taxon>
        <taxon>Eutheria</taxon>
        <taxon>Euarchontoglires</taxon>
        <taxon>Primates</taxon>
        <taxon>Haplorrhini</taxon>
        <taxon>Catarrhini</taxon>
        <taxon>Hominidae</taxon>
        <taxon>Homo</taxon>
    </lineage>
</organism>
<comment type="function">
    <text evidence="7">May play a role in the regulation of plasmin-mediated matrix remodeling. Inhibits trypsin, plasmin, factor VIIa/tissue factor and weakly factor Xa. Has no effect on thrombin.</text>
</comment>
<comment type="subunit">
    <text evidence="5">Finds in a complex with ABCB1, TFPI2 and PPP2R3C; leading to the dephosphorylation of ABCB1.</text>
</comment>
<comment type="subcellular location">
    <subcellularLocation>
        <location>Secreted</location>
    </subcellularLocation>
</comment>
<comment type="alternative products">
    <event type="alternative splicing"/>
    <isoform>
        <id>P48307-1</id>
        <name>1</name>
        <sequence type="displayed"/>
    </isoform>
    <isoform>
        <id>P48307-2</id>
        <name>2</name>
        <sequence type="described" ref="VSP_056031"/>
    </isoform>
</comment>
<comment type="tissue specificity">
    <text>Umbilical vein endothelial cells, liver, placenta, heart, pancreas, and maternal serum at advanced pregnancy.</text>
</comment>
<comment type="domain">
    <text>This inhibitor contains three inhibitory domains.</text>
</comment>
<gene>
    <name type="primary">TFPI2</name>
</gene>
<feature type="signal peptide" evidence="6 7">
    <location>
        <begin position="1"/>
        <end position="22"/>
    </location>
</feature>
<feature type="chain" id="PRO_0000016876" description="Tissue factor pathway inhibitor 2">
    <location>
        <begin position="23"/>
        <end position="235"/>
    </location>
</feature>
<feature type="domain" description="BPTI/Kunitz inhibitor 1" evidence="3">
    <location>
        <begin position="36"/>
        <end position="86"/>
    </location>
</feature>
<feature type="domain" description="BPTI/Kunitz inhibitor 2" evidence="3">
    <location>
        <begin position="96"/>
        <end position="149"/>
    </location>
</feature>
<feature type="domain" description="BPTI/Kunitz inhibitor 3" evidence="3">
    <location>
        <begin position="158"/>
        <end position="208"/>
    </location>
</feature>
<feature type="site" description="Reactive bond" evidence="1">
    <location>
        <begin position="46"/>
        <end position="47"/>
    </location>
</feature>
<feature type="site" description="Reactive bond" evidence="1">
    <location>
        <begin position="107"/>
        <end position="108"/>
    </location>
</feature>
<feature type="site" description="Reactive bond" evidence="1">
    <location>
        <begin position="168"/>
        <end position="169"/>
    </location>
</feature>
<feature type="glycosylation site" description="N-linked (GlcNAc...) asparagine" evidence="2">
    <location>
        <position position="116"/>
    </location>
</feature>
<feature type="glycosylation site" description="N-linked (GlcNAc...) asparagine" evidence="2">
    <location>
        <position position="170"/>
    </location>
</feature>
<feature type="disulfide bond" evidence="3 4">
    <location>
        <begin position="36"/>
        <end position="86"/>
    </location>
</feature>
<feature type="disulfide bond" evidence="3 4">
    <location>
        <begin position="45"/>
        <end position="69"/>
    </location>
</feature>
<feature type="disulfide bond" evidence="3 4">
    <location>
        <begin position="61"/>
        <end position="82"/>
    </location>
</feature>
<feature type="disulfide bond" evidence="3">
    <location>
        <begin position="96"/>
        <end position="149"/>
    </location>
</feature>
<feature type="disulfide bond" evidence="3">
    <location>
        <begin position="106"/>
        <end position="130"/>
    </location>
</feature>
<feature type="disulfide bond" evidence="3">
    <location>
        <begin position="122"/>
        <end position="145"/>
    </location>
</feature>
<feature type="disulfide bond" evidence="3">
    <location>
        <begin position="158"/>
        <end position="208"/>
    </location>
</feature>
<feature type="disulfide bond" evidence="3">
    <location>
        <begin position="167"/>
        <end position="191"/>
    </location>
</feature>
<feature type="disulfide bond" evidence="3">
    <location>
        <begin position="183"/>
        <end position="204"/>
    </location>
</feature>
<feature type="splice variant" id="VSP_056031" description="In isoform 2." evidence="8">
    <location>
        <begin position="30"/>
        <end position="40"/>
    </location>
</feature>
<feature type="sequence variant" id="VAR_012005" description="In dbSNP:rs1804202.">
    <original>V</original>
    <variation>A</variation>
    <location>
        <position position="102"/>
    </location>
</feature>
<feature type="sequence variant" id="VAR_050064" description="In dbSNP:rs12669450.">
    <original>R</original>
    <variation>Q</variation>
    <location>
        <position position="231"/>
    </location>
</feature>
<feature type="sequence conflict" description="In Ref. 11; AA sequence." evidence="9" ref="11">
    <original>D</original>
    <variation>A</variation>
    <location>
        <position position="23"/>
    </location>
</feature>
<feature type="sequence conflict" description="In Ref. 10; AA sequence." evidence="9" ref="10">
    <original>D</original>
    <variation>G</variation>
    <location>
        <position position="23"/>
    </location>
</feature>
<feature type="sequence conflict" description="In Ref. 10; AA sequence." evidence="9" ref="10">
    <original>C</original>
    <variation>I</variation>
    <location>
        <position position="36"/>
    </location>
</feature>
<feature type="sequence conflict" description="In Ref. 10; AA sequence." evidence="9" ref="10">
    <original>Y</original>
    <variation>R</variation>
    <location>
        <position position="42"/>
    </location>
</feature>
<feature type="helix" evidence="10">
    <location>
        <begin position="33"/>
        <end position="36"/>
    </location>
</feature>
<feature type="strand" evidence="10">
    <location>
        <begin position="49"/>
        <end position="55"/>
    </location>
</feature>
<feature type="turn" evidence="10">
    <location>
        <begin position="56"/>
        <end position="59"/>
    </location>
</feature>
<feature type="strand" evidence="10">
    <location>
        <begin position="60"/>
        <end position="66"/>
    </location>
</feature>
<feature type="strand" evidence="10">
    <location>
        <begin position="76"/>
        <end position="78"/>
    </location>
</feature>
<feature type="helix" evidence="10">
    <location>
        <begin position="79"/>
        <end position="85"/>
    </location>
</feature>
<name>TFPI2_HUMAN</name>
<protein>
    <recommendedName>
        <fullName>Tissue factor pathway inhibitor 2</fullName>
        <shortName>TFPI-2</shortName>
    </recommendedName>
    <alternativeName>
        <fullName>Placental protein 5</fullName>
        <shortName>PP5</shortName>
    </alternativeName>
</protein>
<dbReference type="EMBL" id="D29992">
    <property type="protein sequence ID" value="BAA06272.1"/>
    <property type="molecule type" value="mRNA"/>
</dbReference>
<dbReference type="EMBL" id="L27624">
    <property type="protein sequence ID" value="AAA20094.1"/>
    <property type="molecule type" value="mRNA"/>
</dbReference>
<dbReference type="EMBL" id="AF217542">
    <property type="protein sequence ID" value="AAK13254.1"/>
    <property type="molecule type" value="Genomic_DNA"/>
</dbReference>
<dbReference type="EMBL" id="AY691946">
    <property type="protein sequence ID" value="AAU04568.1"/>
    <property type="molecule type" value="mRNA"/>
</dbReference>
<dbReference type="EMBL" id="AK092499">
    <property type="protein sequence ID" value="BAC03906.1"/>
    <property type="molecule type" value="mRNA"/>
</dbReference>
<dbReference type="EMBL" id="AK313260">
    <property type="protein sequence ID" value="BAG36070.1"/>
    <property type="molecule type" value="mRNA"/>
</dbReference>
<dbReference type="EMBL" id="AC002076">
    <property type="protein sequence ID" value="AAS02022.1"/>
    <property type="molecule type" value="Genomic_DNA"/>
</dbReference>
<dbReference type="EMBL" id="CH236949">
    <property type="protein sequence ID" value="EAL24140.1"/>
    <property type="molecule type" value="Genomic_DNA"/>
</dbReference>
<dbReference type="EMBL" id="CH471091">
    <property type="protein sequence ID" value="EAW76809.1"/>
    <property type="molecule type" value="Genomic_DNA"/>
</dbReference>
<dbReference type="EMBL" id="CH471091">
    <property type="protein sequence ID" value="EAW76811.1"/>
    <property type="molecule type" value="Genomic_DNA"/>
</dbReference>
<dbReference type="EMBL" id="BC005330">
    <property type="protein sequence ID" value="AAH05330.1"/>
    <property type="molecule type" value="mRNA"/>
</dbReference>
<dbReference type="CCDS" id="CCDS5632.1">
    <molecule id="P48307-1"/>
</dbReference>
<dbReference type="PIR" id="A54951">
    <property type="entry name" value="A54951"/>
</dbReference>
<dbReference type="PIR" id="S71593">
    <property type="entry name" value="S71593"/>
</dbReference>
<dbReference type="RefSeq" id="NP_001257932.1">
    <molecule id="P48307-2"/>
    <property type="nucleotide sequence ID" value="NM_001271003.2"/>
</dbReference>
<dbReference type="RefSeq" id="NP_006519.1">
    <molecule id="P48307-1"/>
    <property type="nucleotide sequence ID" value="NM_006528.4"/>
</dbReference>
<dbReference type="PDB" id="1ZR0">
    <property type="method" value="X-ray"/>
    <property type="resolution" value="1.80 A"/>
    <property type="chains" value="B/D=28-90"/>
</dbReference>
<dbReference type="PDBsum" id="1ZR0"/>
<dbReference type="SMR" id="P48307"/>
<dbReference type="BioGRID" id="113693">
    <property type="interactions" value="47"/>
</dbReference>
<dbReference type="CORUM" id="P48307"/>
<dbReference type="FunCoup" id="P48307">
    <property type="interactions" value="150"/>
</dbReference>
<dbReference type="IntAct" id="P48307">
    <property type="interactions" value="31"/>
</dbReference>
<dbReference type="MINT" id="P48307"/>
<dbReference type="STRING" id="9606.ENSP00000222543"/>
<dbReference type="MEROPS" id="I02.013"/>
<dbReference type="MEROPS" id="I02.014"/>
<dbReference type="MEROPS" id="I02.951"/>
<dbReference type="GlyCosmos" id="P48307">
    <property type="glycosylation" value="2 sites, No reported glycans"/>
</dbReference>
<dbReference type="GlyGen" id="P48307">
    <property type="glycosylation" value="3 sites, 14 N-linked glycans (2 sites), 1 O-linked glycan (1 site)"/>
</dbReference>
<dbReference type="iPTMnet" id="P48307"/>
<dbReference type="PhosphoSitePlus" id="P48307"/>
<dbReference type="BioMuta" id="TFPI2"/>
<dbReference type="DMDM" id="1351226"/>
<dbReference type="jPOST" id="P48307"/>
<dbReference type="MassIVE" id="P48307"/>
<dbReference type="PaxDb" id="9606-ENSP00000222543"/>
<dbReference type="PeptideAtlas" id="P48307"/>
<dbReference type="ProteomicsDB" id="55875">
    <molecule id="P48307-1"/>
</dbReference>
<dbReference type="Pumba" id="P48307"/>
<dbReference type="Antibodypedia" id="4115">
    <property type="antibodies" value="536 antibodies from 34 providers"/>
</dbReference>
<dbReference type="DNASU" id="7980"/>
<dbReference type="Ensembl" id="ENST00000222543.11">
    <molecule id="P48307-1"/>
    <property type="protein sequence ID" value="ENSP00000222543.5"/>
    <property type="gene ID" value="ENSG00000105825.14"/>
</dbReference>
<dbReference type="GeneID" id="7980"/>
<dbReference type="KEGG" id="hsa:7980"/>
<dbReference type="MANE-Select" id="ENST00000222543.11">
    <property type="protein sequence ID" value="ENSP00000222543.5"/>
    <property type="RefSeq nucleotide sequence ID" value="NM_006528.4"/>
    <property type="RefSeq protein sequence ID" value="NP_006519.1"/>
</dbReference>
<dbReference type="UCSC" id="uc003umy.2">
    <molecule id="P48307-1"/>
    <property type="organism name" value="human"/>
</dbReference>
<dbReference type="AGR" id="HGNC:11761"/>
<dbReference type="CTD" id="7980"/>
<dbReference type="DisGeNET" id="7980"/>
<dbReference type="GeneCards" id="TFPI2"/>
<dbReference type="HGNC" id="HGNC:11761">
    <property type="gene designation" value="TFPI2"/>
</dbReference>
<dbReference type="HPA" id="ENSG00000105825">
    <property type="expression patterns" value="Tissue enriched (placenta)"/>
</dbReference>
<dbReference type="MIM" id="600033">
    <property type="type" value="gene"/>
</dbReference>
<dbReference type="neXtProt" id="NX_P48307"/>
<dbReference type="OpenTargets" id="ENSG00000105825"/>
<dbReference type="PharmGKB" id="PA36476"/>
<dbReference type="VEuPathDB" id="HostDB:ENSG00000105825"/>
<dbReference type="eggNOG" id="KOG4295">
    <property type="taxonomic scope" value="Eukaryota"/>
</dbReference>
<dbReference type="GeneTree" id="ENSGT00940000159917"/>
<dbReference type="HOGENOM" id="CLU_058441_1_0_1"/>
<dbReference type="InParanoid" id="P48307"/>
<dbReference type="OrthoDB" id="5950222at2759"/>
<dbReference type="PAN-GO" id="P48307">
    <property type="GO annotations" value="2 GO annotations based on evolutionary models"/>
</dbReference>
<dbReference type="PhylomeDB" id="P48307"/>
<dbReference type="TreeFam" id="TF315349"/>
<dbReference type="PathwayCommons" id="P48307"/>
<dbReference type="SignaLink" id="P48307"/>
<dbReference type="BioGRID-ORCS" id="7980">
    <property type="hits" value="12 hits in 1149 CRISPR screens"/>
</dbReference>
<dbReference type="ChiTaRS" id="TFPI2">
    <property type="organism name" value="human"/>
</dbReference>
<dbReference type="EvolutionaryTrace" id="P48307"/>
<dbReference type="GeneWiki" id="TFPI2"/>
<dbReference type="GenomeRNAi" id="7980"/>
<dbReference type="Pharos" id="P48307">
    <property type="development level" value="Tbio"/>
</dbReference>
<dbReference type="PRO" id="PR:P48307"/>
<dbReference type="Proteomes" id="UP000005640">
    <property type="component" value="Chromosome 7"/>
</dbReference>
<dbReference type="RNAct" id="P48307">
    <property type="molecule type" value="protein"/>
</dbReference>
<dbReference type="Bgee" id="ENSG00000105825">
    <property type="expression patterns" value="Expressed in stromal cell of endometrium and 128 other cell types or tissues"/>
</dbReference>
<dbReference type="ExpressionAtlas" id="P48307">
    <property type="expression patterns" value="baseline and differential"/>
</dbReference>
<dbReference type="GO" id="GO:0031012">
    <property type="term" value="C:extracellular matrix"/>
    <property type="evidence" value="ECO:0000304"/>
    <property type="project" value="ProtInc"/>
</dbReference>
<dbReference type="GO" id="GO:0005615">
    <property type="term" value="C:extracellular space"/>
    <property type="evidence" value="ECO:0000318"/>
    <property type="project" value="GO_Central"/>
</dbReference>
<dbReference type="GO" id="GO:0005201">
    <property type="term" value="F:extracellular matrix structural constituent"/>
    <property type="evidence" value="ECO:0000304"/>
    <property type="project" value="ProtInc"/>
</dbReference>
<dbReference type="GO" id="GO:0004867">
    <property type="term" value="F:serine-type endopeptidase inhibitor activity"/>
    <property type="evidence" value="ECO:0000318"/>
    <property type="project" value="GO_Central"/>
</dbReference>
<dbReference type="GO" id="GO:0007596">
    <property type="term" value="P:blood coagulation"/>
    <property type="evidence" value="ECO:0007669"/>
    <property type="project" value="UniProtKB-KW"/>
</dbReference>
<dbReference type="CDD" id="cd22615">
    <property type="entry name" value="Kunitz_TFPI1_TFPI2_3-like"/>
    <property type="match status" value="1"/>
</dbReference>
<dbReference type="CDD" id="cd22616">
    <property type="entry name" value="Kunitz_TFPI2_1-like"/>
    <property type="match status" value="1"/>
</dbReference>
<dbReference type="FunFam" id="4.10.410.10:FF:000004">
    <property type="entry name" value="Tissue factor pathway inhibitor"/>
    <property type="match status" value="1"/>
</dbReference>
<dbReference type="FunFam" id="4.10.410.10:FF:000011">
    <property type="entry name" value="Tissue factor pathway inhibitor"/>
    <property type="match status" value="1"/>
</dbReference>
<dbReference type="FunFam" id="4.10.410.10:FF:000018">
    <property type="entry name" value="Tissue factor pathway inhibitor"/>
    <property type="match status" value="1"/>
</dbReference>
<dbReference type="Gene3D" id="4.10.410.10">
    <property type="entry name" value="Pancreatic trypsin inhibitor Kunitz domain"/>
    <property type="match status" value="3"/>
</dbReference>
<dbReference type="InterPro" id="IPR002223">
    <property type="entry name" value="Kunitz_BPTI"/>
</dbReference>
<dbReference type="InterPro" id="IPR036880">
    <property type="entry name" value="Kunitz_BPTI_sf"/>
</dbReference>
<dbReference type="InterPro" id="IPR020901">
    <property type="entry name" value="Prtase_inh_Kunz-CS"/>
</dbReference>
<dbReference type="InterPro" id="IPR008296">
    <property type="entry name" value="TFPI-like"/>
</dbReference>
<dbReference type="InterPro" id="IPR050098">
    <property type="entry name" value="TFPI/VKTCI-like"/>
</dbReference>
<dbReference type="PANTHER" id="PTHR10083">
    <property type="entry name" value="KUNITZ-TYPE PROTEASE INHIBITOR-RELATED"/>
    <property type="match status" value="1"/>
</dbReference>
<dbReference type="Pfam" id="PF00014">
    <property type="entry name" value="Kunitz_BPTI"/>
    <property type="match status" value="3"/>
</dbReference>
<dbReference type="PIRSF" id="PIRSF001620">
    <property type="entry name" value="TFPI"/>
    <property type="match status" value="1"/>
</dbReference>
<dbReference type="PRINTS" id="PR00759">
    <property type="entry name" value="BASICPTASE"/>
</dbReference>
<dbReference type="SMART" id="SM00131">
    <property type="entry name" value="KU"/>
    <property type="match status" value="3"/>
</dbReference>
<dbReference type="SUPFAM" id="SSF57362">
    <property type="entry name" value="BPTI-like"/>
    <property type="match status" value="3"/>
</dbReference>
<dbReference type="PROSITE" id="PS00280">
    <property type="entry name" value="BPTI_KUNITZ_1"/>
    <property type="match status" value="2"/>
</dbReference>
<dbReference type="PROSITE" id="PS50279">
    <property type="entry name" value="BPTI_KUNITZ_2"/>
    <property type="match status" value="3"/>
</dbReference>
<evidence type="ECO:0000250" key="1"/>
<evidence type="ECO:0000255" key="2"/>
<evidence type="ECO:0000255" key="3">
    <source>
        <dbReference type="PROSITE-ProRule" id="PRU00031"/>
    </source>
</evidence>
<evidence type="ECO:0000269" key="4">
    <source>
    </source>
</evidence>
<evidence type="ECO:0000269" key="5">
    <source>
    </source>
</evidence>
<evidence type="ECO:0000269" key="6">
    <source>
    </source>
</evidence>
<evidence type="ECO:0000269" key="7">
    <source>
    </source>
</evidence>
<evidence type="ECO:0000303" key="8">
    <source>
    </source>
</evidence>
<evidence type="ECO:0000305" key="9"/>
<evidence type="ECO:0007829" key="10">
    <source>
        <dbReference type="PDB" id="1ZR0"/>
    </source>
</evidence>